<feature type="chain" id="PRO_0000382543" description="UPF0398 protein BPUM_1952">
    <location>
        <begin position="1"/>
        <end position="186"/>
    </location>
</feature>
<accession>A8FEF5</accession>
<sequence>MKIIAVTGYKPFELGIFKQDEPALQYIKAELQKRLTALIEDGLEWVLISGQLGAEIWTAEVVFELQEEYPALKLAVITPFYDQEERWNEQNKELYEGILAQADFVESVTHRPYESPAQFKQKNRFFIEKTDGLLALYDPEHDGSPKYMIKEAENYTDYPIMYITMDDLRAQVEAEDPFFDEKQEKI</sequence>
<name>Y1952_BACP2</name>
<proteinExistence type="inferred from homology"/>
<evidence type="ECO:0000255" key="1">
    <source>
        <dbReference type="HAMAP-Rule" id="MF_01575"/>
    </source>
</evidence>
<evidence type="ECO:0000305" key="2"/>
<comment type="similarity">
    <text evidence="1">Belongs to the UPF0398 family.</text>
</comment>
<comment type="sequence caution" evidence="2">
    <conflict type="erroneous initiation">
        <sequence resource="EMBL-CDS" id="ABV62622"/>
    </conflict>
</comment>
<reference key="1">
    <citation type="journal article" date="2007" name="PLoS ONE">
        <title>Paradoxical DNA repair and peroxide resistance gene conservation in Bacillus pumilus SAFR-032.</title>
        <authorList>
            <person name="Gioia J."/>
            <person name="Yerrapragada S."/>
            <person name="Qin X."/>
            <person name="Jiang H."/>
            <person name="Igboeli O.C."/>
            <person name="Muzny D."/>
            <person name="Dugan-Rocha S."/>
            <person name="Ding Y."/>
            <person name="Hawes A."/>
            <person name="Liu W."/>
            <person name="Perez L."/>
            <person name="Kovar C."/>
            <person name="Dinh H."/>
            <person name="Lee S."/>
            <person name="Nazareth L."/>
            <person name="Blyth P."/>
            <person name="Holder M."/>
            <person name="Buhay C."/>
            <person name="Tirumalai M.R."/>
            <person name="Liu Y."/>
            <person name="Dasgupta I."/>
            <person name="Bokhetache L."/>
            <person name="Fujita M."/>
            <person name="Karouia F."/>
            <person name="Eswara Moorthy P."/>
            <person name="Siefert J."/>
            <person name="Uzman A."/>
            <person name="Buzumbo P."/>
            <person name="Verma A."/>
            <person name="Zwiya H."/>
            <person name="McWilliams B.D."/>
            <person name="Olowu A."/>
            <person name="Clinkenbeard K.D."/>
            <person name="Newcombe D."/>
            <person name="Golebiewski L."/>
            <person name="Petrosino J.F."/>
            <person name="Nicholson W.L."/>
            <person name="Fox G.E."/>
            <person name="Venkateswaran K."/>
            <person name="Highlander S.K."/>
            <person name="Weinstock G.M."/>
        </authorList>
    </citation>
    <scope>NUCLEOTIDE SEQUENCE [LARGE SCALE GENOMIC DNA]</scope>
    <source>
        <strain>SAFR-032</strain>
    </source>
</reference>
<protein>
    <recommendedName>
        <fullName evidence="1">UPF0398 protein BPUM_1952</fullName>
    </recommendedName>
</protein>
<dbReference type="EMBL" id="CP000813">
    <property type="protein sequence ID" value="ABV62622.1"/>
    <property type="status" value="ALT_INIT"/>
    <property type="molecule type" value="Genomic_DNA"/>
</dbReference>
<dbReference type="RefSeq" id="WP_222434062.1">
    <property type="nucleotide sequence ID" value="NC_009848.4"/>
</dbReference>
<dbReference type="SMR" id="A8FEF5"/>
<dbReference type="STRING" id="315750.BPUM_1952"/>
<dbReference type="GeneID" id="5621217"/>
<dbReference type="KEGG" id="bpu:BPUM_1952"/>
<dbReference type="eggNOG" id="COG4474">
    <property type="taxonomic scope" value="Bacteria"/>
</dbReference>
<dbReference type="HOGENOM" id="CLU_105319_0_0_9"/>
<dbReference type="OrthoDB" id="2301957at2"/>
<dbReference type="Proteomes" id="UP000001355">
    <property type="component" value="Chromosome"/>
</dbReference>
<dbReference type="Gene3D" id="3.40.50.450">
    <property type="match status" value="1"/>
</dbReference>
<dbReference type="HAMAP" id="MF_01575">
    <property type="entry name" value="UPF0398"/>
    <property type="match status" value="1"/>
</dbReference>
<dbReference type="InterPro" id="IPR010697">
    <property type="entry name" value="YspA"/>
</dbReference>
<dbReference type="NCBIfam" id="NF010181">
    <property type="entry name" value="PRK13660.1"/>
    <property type="match status" value="1"/>
</dbReference>
<dbReference type="PANTHER" id="PTHR38440:SF1">
    <property type="entry name" value="UPF0398 PROTEIN SPR0331"/>
    <property type="match status" value="1"/>
</dbReference>
<dbReference type="PANTHER" id="PTHR38440">
    <property type="entry name" value="UPF0398 PROTEIN YPSA"/>
    <property type="match status" value="1"/>
</dbReference>
<dbReference type="Pfam" id="PF06908">
    <property type="entry name" value="YpsA"/>
    <property type="match status" value="1"/>
</dbReference>
<dbReference type="PIRSF" id="PIRSF021290">
    <property type="entry name" value="DUF1273"/>
    <property type="match status" value="1"/>
</dbReference>
<dbReference type="SUPFAM" id="SSF102405">
    <property type="entry name" value="MCP/YpsA-like"/>
    <property type="match status" value="1"/>
</dbReference>
<gene>
    <name type="ordered locus">BPUM_1952</name>
</gene>
<organism>
    <name type="scientific">Bacillus pumilus (strain SAFR-032)</name>
    <dbReference type="NCBI Taxonomy" id="315750"/>
    <lineage>
        <taxon>Bacteria</taxon>
        <taxon>Bacillati</taxon>
        <taxon>Bacillota</taxon>
        <taxon>Bacilli</taxon>
        <taxon>Bacillales</taxon>
        <taxon>Bacillaceae</taxon>
        <taxon>Bacillus</taxon>
    </lineage>
</organism>